<sequence>MKVELCSFSGYKIYPGHGRRYARTDGKVFQFLNAKCESAFLSKRNPRQINWTVLYRRKHKKGQSEEIQKKRTRRAVKFQRAITGASLADIMAKRNQKPEVRKAQREQAIRAAKEAKKAKQASKKTAMAAAKAPTKAAPKQKIVKPVKVSAPRVGGKR</sequence>
<proteinExistence type="evidence at transcript level"/>
<organism>
    <name type="scientific">Felis catus</name>
    <name type="common">Cat</name>
    <name type="synonym">Felis silvestris catus</name>
    <dbReference type="NCBI Taxonomy" id="9685"/>
    <lineage>
        <taxon>Eukaryota</taxon>
        <taxon>Metazoa</taxon>
        <taxon>Chordata</taxon>
        <taxon>Craniata</taxon>
        <taxon>Vertebrata</taxon>
        <taxon>Euteleostomi</taxon>
        <taxon>Mammalia</taxon>
        <taxon>Eutheria</taxon>
        <taxon>Laurasiatheria</taxon>
        <taxon>Carnivora</taxon>
        <taxon>Feliformia</taxon>
        <taxon>Felidae</taxon>
        <taxon>Felinae</taxon>
        <taxon>Felis</taxon>
    </lineage>
</organism>
<reference key="1">
    <citation type="submission" date="2004-07" db="EMBL/GenBank/DDBJ databases">
        <title>Felis catus ribosomal protein L30 mRNA.</title>
        <authorList>
            <person name="Pathak S."/>
            <person name="Pisipati S."/>
            <person name="Kapil S."/>
        </authorList>
    </citation>
    <scope>NUCLEOTIDE SEQUENCE [MRNA]</scope>
</reference>
<gene>
    <name type="primary">RPL24</name>
</gene>
<comment type="function">
    <text evidence="1">Component of the large ribosomal subunit. The ribosome is a large ribonucleoprotein complex responsible for the synthesis of proteins in the cell.</text>
</comment>
<comment type="subunit">
    <text evidence="1">Component of the large ribosomal subunit.</text>
</comment>
<comment type="subcellular location">
    <subcellularLocation>
        <location evidence="1">Cytoplasm</location>
    </subcellularLocation>
</comment>
<comment type="PTM">
    <text evidence="1">Mono-ADP-ribosylation at Glu-4 by PARP16 inhibits polysome assembly and mRNA loading, thereby inhibiting protein translation.</text>
</comment>
<comment type="similarity">
    <text evidence="4">Belongs to the eukaryotic ribosomal protein eL24 family.</text>
</comment>
<protein>
    <recommendedName>
        <fullName evidence="4">Large ribosomal subunit protein eL24</fullName>
    </recommendedName>
    <alternativeName>
        <fullName>60S ribosomal protein L24</fullName>
    </alternativeName>
    <alternativeName>
        <fullName>Ribosomal protein L30</fullName>
    </alternativeName>
</protein>
<name>RL24_FELCA</name>
<evidence type="ECO:0000250" key="1">
    <source>
        <dbReference type="UniProtKB" id="P83731"/>
    </source>
</evidence>
<evidence type="ECO:0000250" key="2">
    <source>
        <dbReference type="UniProtKB" id="Q8BP67"/>
    </source>
</evidence>
<evidence type="ECO:0000256" key="3">
    <source>
        <dbReference type="SAM" id="MobiDB-lite"/>
    </source>
</evidence>
<evidence type="ECO:0000305" key="4"/>
<keyword id="KW-0007">Acetylation</keyword>
<keyword id="KW-0013">ADP-ribosylation</keyword>
<keyword id="KW-0963">Cytoplasm</keyword>
<keyword id="KW-1017">Isopeptide bond</keyword>
<keyword id="KW-0597">Phosphoprotein</keyword>
<keyword id="KW-1185">Reference proteome</keyword>
<keyword id="KW-0687">Ribonucleoprotein</keyword>
<keyword id="KW-0689">Ribosomal protein</keyword>
<keyword id="KW-0832">Ubl conjugation</keyword>
<accession>Q66WF5</accession>
<feature type="chain" id="PRO_0000136866" description="Large ribosomal subunit protein eL24">
    <location>
        <begin position="1"/>
        <end position="157"/>
    </location>
</feature>
<feature type="region of interest" description="Disordered" evidence="3">
    <location>
        <begin position="106"/>
        <end position="157"/>
    </location>
</feature>
<feature type="compositionally biased region" description="Basic and acidic residues" evidence="3">
    <location>
        <begin position="106"/>
        <end position="117"/>
    </location>
</feature>
<feature type="compositionally biased region" description="Low complexity" evidence="3">
    <location>
        <begin position="123"/>
        <end position="140"/>
    </location>
</feature>
<feature type="modified residue" description="ADP-ribosyl glutamic acid" evidence="1">
    <location>
        <position position="4"/>
    </location>
</feature>
<feature type="modified residue" description="N6-acetyllysine; alternate" evidence="1">
    <location>
        <position position="27"/>
    </location>
</feature>
<feature type="modified residue" description="N6-acetyllysine" evidence="1">
    <location>
        <position position="77"/>
    </location>
</feature>
<feature type="modified residue" description="Phosphothreonine" evidence="1">
    <location>
        <position position="83"/>
    </location>
</feature>
<feature type="modified residue" description="Phosphoserine" evidence="1">
    <location>
        <position position="86"/>
    </location>
</feature>
<feature type="modified residue" description="N6-acetyllysine" evidence="1">
    <location>
        <position position="93"/>
    </location>
</feature>
<feature type="modified residue" description="N6-succinyllysine" evidence="2">
    <location>
        <position position="131"/>
    </location>
</feature>
<feature type="modified residue" description="Phosphoserine" evidence="1">
    <location>
        <position position="149"/>
    </location>
</feature>
<feature type="cross-link" description="Glycyl lysine isopeptide (Lys-Gly) (interchain with G-Cter in SUMO2)" evidence="1">
    <location>
        <position position="2"/>
    </location>
</feature>
<feature type="cross-link" description="Glycyl lysine isopeptide (Lys-Gly) (interchain with G-Cter in SUMO2); alternate" evidence="1">
    <location>
        <position position="27"/>
    </location>
</feature>
<feature type="cross-link" description="Glycyl lysine isopeptide (Lys-Gly) (interchain with G-Cter in SUMO2)" evidence="1">
    <location>
        <position position="35"/>
    </location>
</feature>
<feature type="cross-link" description="Glycyl lysine isopeptide (Lys-Gly) (interchain with G-Cter in SUMO2)" evidence="1">
    <location>
        <position position="147"/>
    </location>
</feature>
<dbReference type="EMBL" id="AY700577">
    <property type="protein sequence ID" value="AAU06859.1"/>
    <property type="molecule type" value="mRNA"/>
</dbReference>
<dbReference type="RefSeq" id="NP_001122313.1">
    <property type="nucleotide sequence ID" value="NM_001128841.1"/>
</dbReference>
<dbReference type="RefSeq" id="XP_011281487.1">
    <property type="nucleotide sequence ID" value="XM_011283185.2"/>
</dbReference>
<dbReference type="SMR" id="Q66WF5"/>
<dbReference type="STRING" id="9685.ENSFCAP00000003066"/>
<dbReference type="PaxDb" id="9685-ENSFCAP00000023603"/>
<dbReference type="Ensembl" id="ENSFCAT00000003327.6">
    <property type="protein sequence ID" value="ENSFCAP00000003066.4"/>
    <property type="gene ID" value="ENSFCAG00000003327.6"/>
</dbReference>
<dbReference type="GeneID" id="100169965"/>
<dbReference type="KEGG" id="fca:100169965"/>
<dbReference type="CTD" id="6152"/>
<dbReference type="VGNC" id="VGNC:102833">
    <property type="gene designation" value="RPL24"/>
</dbReference>
<dbReference type="eggNOG" id="KOG1722">
    <property type="taxonomic scope" value="Eukaryota"/>
</dbReference>
<dbReference type="GeneTree" id="ENSGT00950000183105"/>
<dbReference type="HOGENOM" id="CLU_106411_1_0_1"/>
<dbReference type="InParanoid" id="Q66WF5"/>
<dbReference type="OMA" id="QVFRRMH"/>
<dbReference type="OrthoDB" id="1727108at2759"/>
<dbReference type="Proteomes" id="UP000011712">
    <property type="component" value="Chromosome C2"/>
</dbReference>
<dbReference type="Bgee" id="ENSFCAG00000003327">
    <property type="expression patterns" value="Expressed in uterus and 10 other cell types or tissues"/>
</dbReference>
<dbReference type="GO" id="GO:0022625">
    <property type="term" value="C:cytosolic large ribosomal subunit"/>
    <property type="evidence" value="ECO:0000318"/>
    <property type="project" value="GO_Central"/>
</dbReference>
<dbReference type="GO" id="GO:0003729">
    <property type="term" value="F:mRNA binding"/>
    <property type="evidence" value="ECO:0000318"/>
    <property type="project" value="GO_Central"/>
</dbReference>
<dbReference type="GO" id="GO:0003735">
    <property type="term" value="F:structural constituent of ribosome"/>
    <property type="evidence" value="ECO:0000250"/>
    <property type="project" value="UniProtKB"/>
</dbReference>
<dbReference type="GO" id="GO:0002181">
    <property type="term" value="P:cytoplasmic translation"/>
    <property type="evidence" value="ECO:0000250"/>
    <property type="project" value="UniProtKB"/>
</dbReference>
<dbReference type="CDD" id="cd00472">
    <property type="entry name" value="Ribosomal_L24e_L24"/>
    <property type="match status" value="1"/>
</dbReference>
<dbReference type="FunFam" id="2.30.170.20:FF:000004">
    <property type="entry name" value="60S ribosomal protein l24"/>
    <property type="match status" value="1"/>
</dbReference>
<dbReference type="Gene3D" id="6.10.250.1270">
    <property type="match status" value="1"/>
</dbReference>
<dbReference type="Gene3D" id="2.30.170.20">
    <property type="entry name" value="Ribosomal protein L24e"/>
    <property type="match status" value="1"/>
</dbReference>
<dbReference type="InterPro" id="IPR038630">
    <property type="entry name" value="L24e/L24_sf"/>
</dbReference>
<dbReference type="InterPro" id="IPR056366">
    <property type="entry name" value="Ribosomal_eL24"/>
</dbReference>
<dbReference type="InterPro" id="IPR000988">
    <property type="entry name" value="Ribosomal_eL24-rel_N"/>
</dbReference>
<dbReference type="InterPro" id="IPR023442">
    <property type="entry name" value="Ribosomal_eL24_CS"/>
</dbReference>
<dbReference type="InterPro" id="IPR011017">
    <property type="entry name" value="TRASH_dom"/>
</dbReference>
<dbReference type="PANTHER" id="PTHR10792">
    <property type="entry name" value="60S RIBOSOMAL PROTEIN L24"/>
    <property type="match status" value="1"/>
</dbReference>
<dbReference type="PANTHER" id="PTHR10792:SF1">
    <property type="entry name" value="RIBOSOMAL PROTEIN L24"/>
    <property type="match status" value="1"/>
</dbReference>
<dbReference type="Pfam" id="PF01246">
    <property type="entry name" value="Ribosomal_L24e"/>
    <property type="match status" value="1"/>
</dbReference>
<dbReference type="SMART" id="SM00746">
    <property type="entry name" value="TRASH"/>
    <property type="match status" value="1"/>
</dbReference>
<dbReference type="SUPFAM" id="SSF57716">
    <property type="entry name" value="Glucocorticoid receptor-like (DNA-binding domain)"/>
    <property type="match status" value="1"/>
</dbReference>
<dbReference type="PROSITE" id="PS01073">
    <property type="entry name" value="RIBOSOMAL_L24E"/>
    <property type="match status" value="1"/>
</dbReference>